<keyword id="KW-0131">Cell cycle</keyword>
<keyword id="KW-0132">Cell division</keyword>
<keyword id="KW-1003">Cell membrane</keyword>
<keyword id="KW-0133">Cell shape</keyword>
<keyword id="KW-0961">Cell wall biogenesis/degradation</keyword>
<keyword id="KW-0460">Magnesium</keyword>
<keyword id="KW-0472">Membrane</keyword>
<keyword id="KW-0479">Metal-binding</keyword>
<keyword id="KW-0573">Peptidoglycan synthesis</keyword>
<keyword id="KW-1185">Reference proteome</keyword>
<keyword id="KW-0808">Transferase</keyword>
<keyword id="KW-0812">Transmembrane</keyword>
<keyword id="KW-1133">Transmembrane helix</keyword>
<gene>
    <name evidence="1" type="primary">mraY</name>
    <name type="ordered locus">CE2056</name>
</gene>
<dbReference type="EC" id="2.7.8.13" evidence="1"/>
<dbReference type="EMBL" id="BA000035">
    <property type="protein sequence ID" value="BAC18866.1"/>
    <property type="molecule type" value="Genomic_DNA"/>
</dbReference>
<dbReference type="RefSeq" id="WP_006768056.1">
    <property type="nucleotide sequence ID" value="NC_004369.1"/>
</dbReference>
<dbReference type="SMR" id="Q8FNT7"/>
<dbReference type="STRING" id="196164.gene:10742484"/>
<dbReference type="KEGG" id="cef:CE2056"/>
<dbReference type="eggNOG" id="COG0472">
    <property type="taxonomic scope" value="Bacteria"/>
</dbReference>
<dbReference type="HOGENOM" id="CLU_023982_0_1_11"/>
<dbReference type="OrthoDB" id="9805475at2"/>
<dbReference type="UniPathway" id="UPA00219"/>
<dbReference type="Proteomes" id="UP000001409">
    <property type="component" value="Chromosome"/>
</dbReference>
<dbReference type="GO" id="GO:0005886">
    <property type="term" value="C:plasma membrane"/>
    <property type="evidence" value="ECO:0007669"/>
    <property type="project" value="UniProtKB-SubCell"/>
</dbReference>
<dbReference type="GO" id="GO:0046872">
    <property type="term" value="F:metal ion binding"/>
    <property type="evidence" value="ECO:0007669"/>
    <property type="project" value="UniProtKB-KW"/>
</dbReference>
<dbReference type="GO" id="GO:0008963">
    <property type="term" value="F:phospho-N-acetylmuramoyl-pentapeptide-transferase activity"/>
    <property type="evidence" value="ECO:0007669"/>
    <property type="project" value="UniProtKB-UniRule"/>
</dbReference>
<dbReference type="GO" id="GO:0051992">
    <property type="term" value="F:UDP-N-acetylmuramoyl-L-alanyl-D-glutamyl-meso-2,6-diaminopimelyl-D-alanyl-D-alanine:undecaprenyl-phosphate transferase activity"/>
    <property type="evidence" value="ECO:0007669"/>
    <property type="project" value="RHEA"/>
</dbReference>
<dbReference type="GO" id="GO:0051301">
    <property type="term" value="P:cell division"/>
    <property type="evidence" value="ECO:0007669"/>
    <property type="project" value="UniProtKB-KW"/>
</dbReference>
<dbReference type="GO" id="GO:0071555">
    <property type="term" value="P:cell wall organization"/>
    <property type="evidence" value="ECO:0007669"/>
    <property type="project" value="UniProtKB-KW"/>
</dbReference>
<dbReference type="GO" id="GO:0009252">
    <property type="term" value="P:peptidoglycan biosynthetic process"/>
    <property type="evidence" value="ECO:0007669"/>
    <property type="project" value="UniProtKB-UniRule"/>
</dbReference>
<dbReference type="GO" id="GO:0008360">
    <property type="term" value="P:regulation of cell shape"/>
    <property type="evidence" value="ECO:0007669"/>
    <property type="project" value="UniProtKB-KW"/>
</dbReference>
<dbReference type="CDD" id="cd06852">
    <property type="entry name" value="GT_MraY"/>
    <property type="match status" value="1"/>
</dbReference>
<dbReference type="HAMAP" id="MF_00038">
    <property type="entry name" value="MraY"/>
    <property type="match status" value="1"/>
</dbReference>
<dbReference type="InterPro" id="IPR000715">
    <property type="entry name" value="Glycosyl_transferase_4"/>
</dbReference>
<dbReference type="InterPro" id="IPR003524">
    <property type="entry name" value="PNAcMuramoyl-5peptid_Trfase"/>
</dbReference>
<dbReference type="InterPro" id="IPR018480">
    <property type="entry name" value="PNAcMuramoyl-5peptid_Trfase_CS"/>
</dbReference>
<dbReference type="NCBIfam" id="TIGR00445">
    <property type="entry name" value="mraY"/>
    <property type="match status" value="1"/>
</dbReference>
<dbReference type="PANTHER" id="PTHR22926">
    <property type="entry name" value="PHOSPHO-N-ACETYLMURAMOYL-PENTAPEPTIDE-TRANSFERASE"/>
    <property type="match status" value="1"/>
</dbReference>
<dbReference type="PANTHER" id="PTHR22926:SF5">
    <property type="entry name" value="PHOSPHO-N-ACETYLMURAMOYL-PENTAPEPTIDE-TRANSFERASE HOMOLOG"/>
    <property type="match status" value="1"/>
</dbReference>
<dbReference type="Pfam" id="PF00953">
    <property type="entry name" value="Glycos_transf_4"/>
    <property type="match status" value="1"/>
</dbReference>
<dbReference type="Pfam" id="PF10555">
    <property type="entry name" value="MraY_sig1"/>
    <property type="match status" value="1"/>
</dbReference>
<dbReference type="PROSITE" id="PS01347">
    <property type="entry name" value="MRAY_1"/>
    <property type="match status" value="1"/>
</dbReference>
<dbReference type="PROSITE" id="PS01348">
    <property type="entry name" value="MRAY_2"/>
    <property type="match status" value="1"/>
</dbReference>
<organism>
    <name type="scientific">Corynebacterium efficiens (strain DSM 44549 / YS-314 / AJ 12310 / JCM 11189 / NBRC 100395)</name>
    <dbReference type="NCBI Taxonomy" id="196164"/>
    <lineage>
        <taxon>Bacteria</taxon>
        <taxon>Bacillati</taxon>
        <taxon>Actinomycetota</taxon>
        <taxon>Actinomycetes</taxon>
        <taxon>Mycobacteriales</taxon>
        <taxon>Corynebacteriaceae</taxon>
        <taxon>Corynebacterium</taxon>
    </lineage>
</organism>
<reference key="1">
    <citation type="journal article" date="2003" name="Genome Res.">
        <title>Comparative complete genome sequence analysis of the amino acid replacements responsible for the thermostability of Corynebacterium efficiens.</title>
        <authorList>
            <person name="Nishio Y."/>
            <person name="Nakamura Y."/>
            <person name="Kawarabayasi Y."/>
            <person name="Usuda Y."/>
            <person name="Kimura E."/>
            <person name="Sugimoto S."/>
            <person name="Matsui K."/>
            <person name="Yamagishi A."/>
            <person name="Kikuchi H."/>
            <person name="Ikeo K."/>
            <person name="Gojobori T."/>
        </authorList>
    </citation>
    <scope>NUCLEOTIDE SEQUENCE [LARGE SCALE GENOMIC DNA]</scope>
    <source>
        <strain>DSM 44549 / YS-314 / AJ 12310 / JCM 11189 / NBRC 100395</strain>
    </source>
</reference>
<comment type="function">
    <text evidence="1">Catalyzes the initial step of the lipid cycle reactions in the biosynthesis of the cell wall peptidoglycan: transfers peptidoglycan precursor phospho-MurNAc-pentapeptide from UDP-MurNAc-pentapeptide onto the lipid carrier undecaprenyl phosphate, yielding undecaprenyl-pyrophosphoryl-MurNAc-pentapeptide, known as lipid I.</text>
</comment>
<comment type="catalytic activity">
    <reaction evidence="1">
        <text>UDP-N-acetyl-alpha-D-muramoyl-L-alanyl-gamma-D-glutamyl-meso-2,6-diaminopimeloyl-D-alanyl-D-alanine + di-trans,octa-cis-undecaprenyl phosphate = di-trans,octa-cis-undecaprenyl diphospho-N-acetyl-alpha-D-muramoyl-L-alanyl-D-glutamyl-meso-2,6-diaminopimeloyl-D-alanyl-D-alanine + UMP</text>
        <dbReference type="Rhea" id="RHEA:28386"/>
        <dbReference type="ChEBI" id="CHEBI:57865"/>
        <dbReference type="ChEBI" id="CHEBI:60392"/>
        <dbReference type="ChEBI" id="CHEBI:61386"/>
        <dbReference type="ChEBI" id="CHEBI:61387"/>
        <dbReference type="EC" id="2.7.8.13"/>
    </reaction>
</comment>
<comment type="cofactor">
    <cofactor evidence="1">
        <name>Mg(2+)</name>
        <dbReference type="ChEBI" id="CHEBI:18420"/>
    </cofactor>
</comment>
<comment type="pathway">
    <text evidence="1">Cell wall biogenesis; peptidoglycan biosynthesis.</text>
</comment>
<comment type="subcellular location">
    <subcellularLocation>
        <location evidence="1">Cell membrane</location>
        <topology evidence="1">Multi-pass membrane protein</topology>
    </subcellularLocation>
</comment>
<comment type="similarity">
    <text evidence="1">Belongs to the glycosyltransferase 4 family. MraY subfamily.</text>
</comment>
<sequence length="366" mass="39221">MQQIIISGSVAFLVSIFLTPILIRYFTNRQMGQEIREEGLQSHLRKRGTPTMGGIAIIAGITIGYLVTNIYSYFAGYGSFTASGLLVLGLMLGLGATGFADDFIKLYKERNLGLNKTAKLISQLAIALVFGLLVLRFPDENGLTPASTHLSFIRDIDTIDIAFGGGVLGTIVFLIFIYVVVSAWSNAVNITDGLDGLAAGATAFVMGAYTLIAFWQFRNSCDTAVEAGCYTVRDPLDIAVLAAGGLGATLGFLWWNAAPAKIFMGDTGSLALGGLVAGISVVSRTELLMVIIGALFVIEVASVAIQIAVFKTRGKRVFRMAPIHHHFEAVGWAETTVVVRFWLIAIMAVIAGMAVFYGDWLTLAEV</sequence>
<proteinExistence type="inferred from homology"/>
<feature type="chain" id="PRO_0000108814" description="Phospho-N-acetylmuramoyl-pentapeptide-transferase">
    <location>
        <begin position="1"/>
        <end position="366"/>
    </location>
</feature>
<feature type="transmembrane region" description="Helical" evidence="1">
    <location>
        <begin position="3"/>
        <end position="23"/>
    </location>
</feature>
<feature type="transmembrane region" description="Helical" evidence="1">
    <location>
        <begin position="55"/>
        <end position="75"/>
    </location>
</feature>
<feature type="transmembrane region" description="Helical" evidence="1">
    <location>
        <begin position="80"/>
        <end position="100"/>
    </location>
</feature>
<feature type="transmembrane region" description="Helical" evidence="1">
    <location>
        <begin position="118"/>
        <end position="138"/>
    </location>
</feature>
<feature type="transmembrane region" description="Helical" evidence="1">
    <location>
        <begin position="161"/>
        <end position="181"/>
    </location>
</feature>
<feature type="transmembrane region" description="Helical" evidence="1">
    <location>
        <begin position="197"/>
        <end position="217"/>
    </location>
</feature>
<feature type="transmembrane region" description="Helical" evidence="1">
    <location>
        <begin position="238"/>
        <end position="258"/>
    </location>
</feature>
<feature type="transmembrane region" description="Helical" evidence="1">
    <location>
        <begin position="262"/>
        <end position="282"/>
    </location>
</feature>
<feature type="transmembrane region" description="Helical" evidence="1">
    <location>
        <begin position="290"/>
        <end position="310"/>
    </location>
</feature>
<feature type="transmembrane region" description="Helical" evidence="1">
    <location>
        <begin position="341"/>
        <end position="361"/>
    </location>
</feature>
<name>MRAY_COREF</name>
<protein>
    <recommendedName>
        <fullName evidence="1">Phospho-N-acetylmuramoyl-pentapeptide-transferase</fullName>
        <ecNumber evidence="1">2.7.8.13</ecNumber>
    </recommendedName>
    <alternativeName>
        <fullName evidence="1">UDP-MurNAc-pentapeptide phosphotransferase</fullName>
    </alternativeName>
</protein>
<accession>Q8FNT7</accession>
<evidence type="ECO:0000255" key="1">
    <source>
        <dbReference type="HAMAP-Rule" id="MF_00038"/>
    </source>
</evidence>